<name>NUOB_RICM5</name>
<sequence length="174" mass="19645">MKNNFYQEDELLSNELSNRGFLLTKVDNVIGWARANSLWPMTFGLACCAVEMMQAAASRYDMDRFGMLFRPSPRQSDLMIVAGTLTNKMAPALRKVYDQMAEPKWVLSMGSCANGGGYYHFSYSVVRGCDRIVPVDVYVPGCPPTAEALIYGLMQLQKKIKRTTGFKYDTRQTH</sequence>
<dbReference type="EC" id="7.1.1.-" evidence="2"/>
<dbReference type="EMBL" id="CP000683">
    <property type="protein sequence ID" value="ABV84713.1"/>
    <property type="molecule type" value="Genomic_DNA"/>
</dbReference>
<dbReference type="RefSeq" id="WP_012152688.1">
    <property type="nucleotide sequence ID" value="NC_009900.1"/>
</dbReference>
<dbReference type="SMR" id="A8F1C7"/>
<dbReference type="KEGG" id="rms:RMA_0503"/>
<dbReference type="HOGENOM" id="CLU_055737_7_3_5"/>
<dbReference type="Proteomes" id="UP000001311">
    <property type="component" value="Chromosome"/>
</dbReference>
<dbReference type="GO" id="GO:0005886">
    <property type="term" value="C:plasma membrane"/>
    <property type="evidence" value="ECO:0007669"/>
    <property type="project" value="UniProtKB-SubCell"/>
</dbReference>
<dbReference type="GO" id="GO:0045271">
    <property type="term" value="C:respiratory chain complex I"/>
    <property type="evidence" value="ECO:0007669"/>
    <property type="project" value="TreeGrafter"/>
</dbReference>
<dbReference type="GO" id="GO:0051539">
    <property type="term" value="F:4 iron, 4 sulfur cluster binding"/>
    <property type="evidence" value="ECO:0007669"/>
    <property type="project" value="UniProtKB-KW"/>
</dbReference>
<dbReference type="GO" id="GO:0005506">
    <property type="term" value="F:iron ion binding"/>
    <property type="evidence" value="ECO:0007669"/>
    <property type="project" value="UniProtKB-UniRule"/>
</dbReference>
<dbReference type="GO" id="GO:0008137">
    <property type="term" value="F:NADH dehydrogenase (ubiquinone) activity"/>
    <property type="evidence" value="ECO:0007669"/>
    <property type="project" value="InterPro"/>
</dbReference>
<dbReference type="GO" id="GO:0050136">
    <property type="term" value="F:NADH:ubiquinone reductase (non-electrogenic) activity"/>
    <property type="evidence" value="ECO:0007669"/>
    <property type="project" value="UniProtKB-UniRule"/>
</dbReference>
<dbReference type="GO" id="GO:0048038">
    <property type="term" value="F:quinone binding"/>
    <property type="evidence" value="ECO:0007669"/>
    <property type="project" value="UniProtKB-KW"/>
</dbReference>
<dbReference type="GO" id="GO:0009060">
    <property type="term" value="P:aerobic respiration"/>
    <property type="evidence" value="ECO:0007669"/>
    <property type="project" value="TreeGrafter"/>
</dbReference>
<dbReference type="GO" id="GO:0015990">
    <property type="term" value="P:electron transport coupled proton transport"/>
    <property type="evidence" value="ECO:0007669"/>
    <property type="project" value="TreeGrafter"/>
</dbReference>
<dbReference type="FunFam" id="3.40.50.12280:FF:000001">
    <property type="entry name" value="NADH-quinone oxidoreductase subunit B 2"/>
    <property type="match status" value="1"/>
</dbReference>
<dbReference type="Gene3D" id="3.40.50.12280">
    <property type="match status" value="1"/>
</dbReference>
<dbReference type="HAMAP" id="MF_01356">
    <property type="entry name" value="NDH1_NuoB"/>
    <property type="match status" value="1"/>
</dbReference>
<dbReference type="InterPro" id="IPR006137">
    <property type="entry name" value="NADH_UbQ_OxRdtase-like_20kDa"/>
</dbReference>
<dbReference type="InterPro" id="IPR006138">
    <property type="entry name" value="NADH_UQ_OxRdtase_20Kd_su"/>
</dbReference>
<dbReference type="NCBIfam" id="TIGR01957">
    <property type="entry name" value="nuoB_fam"/>
    <property type="match status" value="1"/>
</dbReference>
<dbReference type="NCBIfam" id="NF005012">
    <property type="entry name" value="PRK06411.1"/>
    <property type="match status" value="1"/>
</dbReference>
<dbReference type="PANTHER" id="PTHR11995">
    <property type="entry name" value="NADH DEHYDROGENASE"/>
    <property type="match status" value="1"/>
</dbReference>
<dbReference type="PANTHER" id="PTHR11995:SF14">
    <property type="entry name" value="NADH DEHYDROGENASE [UBIQUINONE] IRON-SULFUR PROTEIN 7, MITOCHONDRIAL"/>
    <property type="match status" value="1"/>
</dbReference>
<dbReference type="Pfam" id="PF01058">
    <property type="entry name" value="Oxidored_q6"/>
    <property type="match status" value="1"/>
</dbReference>
<dbReference type="SUPFAM" id="SSF56770">
    <property type="entry name" value="HydA/Nqo6-like"/>
    <property type="match status" value="1"/>
</dbReference>
<dbReference type="PROSITE" id="PS01150">
    <property type="entry name" value="COMPLEX1_20K"/>
    <property type="match status" value="1"/>
</dbReference>
<protein>
    <recommendedName>
        <fullName evidence="2">NADH-quinone oxidoreductase subunit B</fullName>
        <ecNumber evidence="2">7.1.1.-</ecNumber>
    </recommendedName>
    <alternativeName>
        <fullName evidence="2">NADH dehydrogenase I subunit B</fullName>
    </alternativeName>
    <alternativeName>
        <fullName evidence="2">NDH-1 subunit B</fullName>
    </alternativeName>
</protein>
<evidence type="ECO:0000250" key="1"/>
<evidence type="ECO:0000255" key="2">
    <source>
        <dbReference type="HAMAP-Rule" id="MF_01356"/>
    </source>
</evidence>
<feature type="chain" id="PRO_0000358474" description="NADH-quinone oxidoreductase subunit B">
    <location>
        <begin position="1"/>
        <end position="174"/>
    </location>
</feature>
<feature type="binding site" evidence="2">
    <location>
        <position position="47"/>
    </location>
    <ligand>
        <name>[4Fe-4S] cluster</name>
        <dbReference type="ChEBI" id="CHEBI:49883"/>
    </ligand>
</feature>
<feature type="binding site" evidence="2">
    <location>
        <position position="48"/>
    </location>
    <ligand>
        <name>[4Fe-4S] cluster</name>
        <dbReference type="ChEBI" id="CHEBI:49883"/>
    </ligand>
</feature>
<feature type="binding site" evidence="2">
    <location>
        <position position="112"/>
    </location>
    <ligand>
        <name>[4Fe-4S] cluster</name>
        <dbReference type="ChEBI" id="CHEBI:49883"/>
    </ligand>
</feature>
<feature type="binding site" evidence="2">
    <location>
        <position position="142"/>
    </location>
    <ligand>
        <name>[4Fe-4S] cluster</name>
        <dbReference type="ChEBI" id="CHEBI:49883"/>
    </ligand>
</feature>
<organism>
    <name type="scientific">Rickettsia massiliae (strain Mtu5)</name>
    <dbReference type="NCBI Taxonomy" id="416276"/>
    <lineage>
        <taxon>Bacteria</taxon>
        <taxon>Pseudomonadati</taxon>
        <taxon>Pseudomonadota</taxon>
        <taxon>Alphaproteobacteria</taxon>
        <taxon>Rickettsiales</taxon>
        <taxon>Rickettsiaceae</taxon>
        <taxon>Rickettsieae</taxon>
        <taxon>Rickettsia</taxon>
        <taxon>spotted fever group</taxon>
    </lineage>
</organism>
<accession>A8F1C7</accession>
<comment type="function">
    <text evidence="1">NDH-1 shuttles electrons from NADH, via FMN and iron-sulfur (Fe-S) centers, to quinones in the respiratory chain. Couples the redox reaction to proton translocation (for every two electrons transferred, four hydrogen ions are translocated across the cytoplasmic membrane), and thus conserves the redox energy in a proton gradient (By similarity).</text>
</comment>
<comment type="catalytic activity">
    <reaction evidence="2">
        <text>a quinone + NADH + 5 H(+)(in) = a quinol + NAD(+) + 4 H(+)(out)</text>
        <dbReference type="Rhea" id="RHEA:57888"/>
        <dbReference type="ChEBI" id="CHEBI:15378"/>
        <dbReference type="ChEBI" id="CHEBI:24646"/>
        <dbReference type="ChEBI" id="CHEBI:57540"/>
        <dbReference type="ChEBI" id="CHEBI:57945"/>
        <dbReference type="ChEBI" id="CHEBI:132124"/>
    </reaction>
</comment>
<comment type="cofactor">
    <cofactor evidence="2">
        <name>[4Fe-4S] cluster</name>
        <dbReference type="ChEBI" id="CHEBI:49883"/>
    </cofactor>
    <text evidence="2">Binds 1 [4Fe-4S] cluster.</text>
</comment>
<comment type="subunit">
    <text evidence="2">NDH-1 is composed of 14 different subunits. Subunits NuoB, C, D, E, F, and G constitute the peripheral sector of the complex.</text>
</comment>
<comment type="subcellular location">
    <subcellularLocation>
        <location evidence="2">Cell inner membrane</location>
        <topology evidence="2">Peripheral membrane protein</topology>
        <orientation evidence="2">Cytoplasmic side</orientation>
    </subcellularLocation>
</comment>
<comment type="similarity">
    <text evidence="2">Belongs to the complex I 20 kDa subunit family.</text>
</comment>
<proteinExistence type="inferred from homology"/>
<reference key="1">
    <citation type="journal article" date="2007" name="Genome Res.">
        <title>Lateral gene transfer between obligate intracellular bacteria: evidence from the Rickettsia massiliae genome.</title>
        <authorList>
            <person name="Blanc G."/>
            <person name="Ogata H."/>
            <person name="Robert C."/>
            <person name="Audic S."/>
            <person name="Claverie J.-M."/>
            <person name="Raoult D."/>
        </authorList>
    </citation>
    <scope>NUCLEOTIDE SEQUENCE [LARGE SCALE GENOMIC DNA]</scope>
    <source>
        <strain>Mtu5</strain>
    </source>
</reference>
<gene>
    <name evidence="2" type="primary">nuoB</name>
    <name type="ordered locus">RMA_0503</name>
</gene>
<keyword id="KW-0004">4Fe-4S</keyword>
<keyword id="KW-0997">Cell inner membrane</keyword>
<keyword id="KW-1003">Cell membrane</keyword>
<keyword id="KW-0408">Iron</keyword>
<keyword id="KW-0411">Iron-sulfur</keyword>
<keyword id="KW-0472">Membrane</keyword>
<keyword id="KW-0479">Metal-binding</keyword>
<keyword id="KW-0520">NAD</keyword>
<keyword id="KW-0874">Quinone</keyword>
<keyword id="KW-1278">Translocase</keyword>
<keyword id="KW-0813">Transport</keyword>
<keyword id="KW-0830">Ubiquinone</keyword>